<reference key="1">
    <citation type="journal article" date="2008" name="J. Bacteriol.">
        <title>Genome sequence of the streptomycin-producing microorganism Streptomyces griseus IFO 13350.</title>
        <authorList>
            <person name="Ohnishi Y."/>
            <person name="Ishikawa J."/>
            <person name="Hara H."/>
            <person name="Suzuki H."/>
            <person name="Ikenoya M."/>
            <person name="Ikeda H."/>
            <person name="Yamashita A."/>
            <person name="Hattori M."/>
            <person name="Horinouchi S."/>
        </authorList>
    </citation>
    <scope>NUCLEOTIDE SEQUENCE [LARGE SCALE GENOMIC DNA]</scope>
    <source>
        <strain>JCM 4626 / CBS 651.72 / NBRC 13350 / KCC S-0626 / ISP 5235</strain>
    </source>
</reference>
<feature type="chain" id="PRO_1000100199" description="GTP cyclohydrolase 1">
    <location>
        <begin position="1"/>
        <end position="201"/>
    </location>
</feature>
<feature type="binding site" evidence="1">
    <location>
        <position position="90"/>
    </location>
    <ligand>
        <name>Zn(2+)</name>
        <dbReference type="ChEBI" id="CHEBI:29105"/>
    </ligand>
</feature>
<feature type="binding site" evidence="1">
    <location>
        <position position="93"/>
    </location>
    <ligand>
        <name>Zn(2+)</name>
        <dbReference type="ChEBI" id="CHEBI:29105"/>
    </ligand>
</feature>
<feature type="binding site" evidence="1">
    <location>
        <position position="163"/>
    </location>
    <ligand>
        <name>Zn(2+)</name>
        <dbReference type="ChEBI" id="CHEBI:29105"/>
    </ligand>
</feature>
<gene>
    <name evidence="1" type="primary">folE</name>
    <name type="ordered locus">SGR_4089</name>
</gene>
<organism>
    <name type="scientific">Streptomyces griseus subsp. griseus (strain JCM 4626 / CBS 651.72 / NBRC 13350 / KCC S-0626 / ISP 5235)</name>
    <dbReference type="NCBI Taxonomy" id="455632"/>
    <lineage>
        <taxon>Bacteria</taxon>
        <taxon>Bacillati</taxon>
        <taxon>Actinomycetota</taxon>
        <taxon>Actinomycetes</taxon>
        <taxon>Kitasatosporales</taxon>
        <taxon>Streptomycetaceae</taxon>
        <taxon>Streptomyces</taxon>
    </lineage>
</organism>
<accession>B1VSG4</accession>
<evidence type="ECO:0000255" key="1">
    <source>
        <dbReference type="HAMAP-Rule" id="MF_00223"/>
    </source>
</evidence>
<dbReference type="EC" id="3.5.4.16" evidence="1"/>
<dbReference type="EMBL" id="AP009493">
    <property type="protein sequence ID" value="BAG20918.1"/>
    <property type="molecule type" value="Genomic_DNA"/>
</dbReference>
<dbReference type="RefSeq" id="WP_003968265.1">
    <property type="nucleotide sequence ID" value="NC_010572.1"/>
</dbReference>
<dbReference type="SMR" id="B1VSG4"/>
<dbReference type="KEGG" id="sgr:SGR_4089"/>
<dbReference type="eggNOG" id="COG0302">
    <property type="taxonomic scope" value="Bacteria"/>
</dbReference>
<dbReference type="HOGENOM" id="CLU_049768_3_3_11"/>
<dbReference type="UniPathway" id="UPA00848">
    <property type="reaction ID" value="UER00151"/>
</dbReference>
<dbReference type="Proteomes" id="UP000001685">
    <property type="component" value="Chromosome"/>
</dbReference>
<dbReference type="GO" id="GO:0005737">
    <property type="term" value="C:cytoplasm"/>
    <property type="evidence" value="ECO:0007669"/>
    <property type="project" value="TreeGrafter"/>
</dbReference>
<dbReference type="GO" id="GO:0005525">
    <property type="term" value="F:GTP binding"/>
    <property type="evidence" value="ECO:0007669"/>
    <property type="project" value="UniProtKB-KW"/>
</dbReference>
<dbReference type="GO" id="GO:0003934">
    <property type="term" value="F:GTP cyclohydrolase I activity"/>
    <property type="evidence" value="ECO:0007669"/>
    <property type="project" value="UniProtKB-UniRule"/>
</dbReference>
<dbReference type="GO" id="GO:0008270">
    <property type="term" value="F:zinc ion binding"/>
    <property type="evidence" value="ECO:0007669"/>
    <property type="project" value="UniProtKB-UniRule"/>
</dbReference>
<dbReference type="GO" id="GO:0006730">
    <property type="term" value="P:one-carbon metabolic process"/>
    <property type="evidence" value="ECO:0007669"/>
    <property type="project" value="UniProtKB-UniRule"/>
</dbReference>
<dbReference type="GO" id="GO:0006729">
    <property type="term" value="P:tetrahydrobiopterin biosynthetic process"/>
    <property type="evidence" value="ECO:0007669"/>
    <property type="project" value="TreeGrafter"/>
</dbReference>
<dbReference type="GO" id="GO:0046654">
    <property type="term" value="P:tetrahydrofolate biosynthetic process"/>
    <property type="evidence" value="ECO:0007669"/>
    <property type="project" value="UniProtKB-UniRule"/>
</dbReference>
<dbReference type="FunFam" id="1.10.286.10:FF:000001">
    <property type="entry name" value="GTP cyclohydrolase 1"/>
    <property type="match status" value="1"/>
</dbReference>
<dbReference type="FunFam" id="3.30.1130.10:FF:000001">
    <property type="entry name" value="GTP cyclohydrolase 1"/>
    <property type="match status" value="1"/>
</dbReference>
<dbReference type="Gene3D" id="1.10.286.10">
    <property type="match status" value="1"/>
</dbReference>
<dbReference type="Gene3D" id="3.30.1130.10">
    <property type="match status" value="1"/>
</dbReference>
<dbReference type="HAMAP" id="MF_00223">
    <property type="entry name" value="FolE"/>
    <property type="match status" value="1"/>
</dbReference>
<dbReference type="InterPro" id="IPR043133">
    <property type="entry name" value="GTP-CH-I_C/QueF"/>
</dbReference>
<dbReference type="InterPro" id="IPR043134">
    <property type="entry name" value="GTP-CH-I_N"/>
</dbReference>
<dbReference type="InterPro" id="IPR001474">
    <property type="entry name" value="GTP_CycHdrlase_I"/>
</dbReference>
<dbReference type="InterPro" id="IPR018234">
    <property type="entry name" value="GTP_CycHdrlase_I_CS"/>
</dbReference>
<dbReference type="InterPro" id="IPR020602">
    <property type="entry name" value="GTP_CycHdrlase_I_dom"/>
</dbReference>
<dbReference type="NCBIfam" id="TIGR00063">
    <property type="entry name" value="folE"/>
    <property type="match status" value="1"/>
</dbReference>
<dbReference type="NCBIfam" id="NF006825">
    <property type="entry name" value="PRK09347.1-2"/>
    <property type="match status" value="1"/>
</dbReference>
<dbReference type="NCBIfam" id="NF006826">
    <property type="entry name" value="PRK09347.1-3"/>
    <property type="match status" value="1"/>
</dbReference>
<dbReference type="PANTHER" id="PTHR11109:SF7">
    <property type="entry name" value="GTP CYCLOHYDROLASE 1"/>
    <property type="match status" value="1"/>
</dbReference>
<dbReference type="PANTHER" id="PTHR11109">
    <property type="entry name" value="GTP CYCLOHYDROLASE I"/>
    <property type="match status" value="1"/>
</dbReference>
<dbReference type="Pfam" id="PF01227">
    <property type="entry name" value="GTP_cyclohydroI"/>
    <property type="match status" value="1"/>
</dbReference>
<dbReference type="SUPFAM" id="SSF55620">
    <property type="entry name" value="Tetrahydrobiopterin biosynthesis enzymes-like"/>
    <property type="match status" value="1"/>
</dbReference>
<dbReference type="PROSITE" id="PS00859">
    <property type="entry name" value="GTP_CYCLOHYDROL_1_1"/>
    <property type="match status" value="1"/>
</dbReference>
<dbReference type="PROSITE" id="PS00860">
    <property type="entry name" value="GTP_CYCLOHYDROL_1_2"/>
    <property type="match status" value="1"/>
</dbReference>
<keyword id="KW-0342">GTP-binding</keyword>
<keyword id="KW-0378">Hydrolase</keyword>
<keyword id="KW-0479">Metal-binding</keyword>
<keyword id="KW-0547">Nucleotide-binding</keyword>
<keyword id="KW-0554">One-carbon metabolism</keyword>
<keyword id="KW-0862">Zinc</keyword>
<name>GCH1_STRGG</name>
<comment type="catalytic activity">
    <reaction evidence="1">
        <text>GTP + H2O = 7,8-dihydroneopterin 3'-triphosphate + formate + H(+)</text>
        <dbReference type="Rhea" id="RHEA:17473"/>
        <dbReference type="ChEBI" id="CHEBI:15377"/>
        <dbReference type="ChEBI" id="CHEBI:15378"/>
        <dbReference type="ChEBI" id="CHEBI:15740"/>
        <dbReference type="ChEBI" id="CHEBI:37565"/>
        <dbReference type="ChEBI" id="CHEBI:58462"/>
        <dbReference type="EC" id="3.5.4.16"/>
    </reaction>
</comment>
<comment type="pathway">
    <text evidence="1">Cofactor biosynthesis; 7,8-dihydroneopterin triphosphate biosynthesis; 7,8-dihydroneopterin triphosphate from GTP: step 1/1.</text>
</comment>
<comment type="subunit">
    <text evidence="1">Homomer.</text>
</comment>
<comment type="similarity">
    <text evidence="1">Belongs to the GTP cyclohydrolase I family.</text>
</comment>
<sequence>MTDPVTLDGQGSIGAFDEKRAEAAVRELLIAVGEDPDREGLRETPGRVARAYKEIFAGLYQEPEDVLTTTFDLGHDEMVLVKDIEVFSTCEHHLVPFRGVAHVGYIPATTGKITGLSKLARLVDVYARRPQVQERLTTQIAESLMSILEPRGVIVVVECEHMCMSMRGIRKPGAKTLTSAVRGQLRDPATRAEAMSLIMAR</sequence>
<protein>
    <recommendedName>
        <fullName evidence="1">GTP cyclohydrolase 1</fullName>
        <ecNumber evidence="1">3.5.4.16</ecNumber>
    </recommendedName>
    <alternativeName>
        <fullName evidence="1">GTP cyclohydrolase I</fullName>
        <shortName evidence="1">GTP-CH-I</shortName>
    </alternativeName>
</protein>
<proteinExistence type="inferred from homology"/>